<geneLocation type="mitochondrion"/>
<evidence type="ECO:0000250" key="1"/>
<evidence type="ECO:0000250" key="2">
    <source>
        <dbReference type="UniProtKB" id="P00157"/>
    </source>
</evidence>
<evidence type="ECO:0000255" key="3">
    <source>
        <dbReference type="PROSITE-ProRule" id="PRU00968"/>
    </source>
</evidence>
<protein>
    <recommendedName>
        <fullName>Cytochrome b</fullName>
    </recommendedName>
    <alternativeName>
        <fullName>Complex III subunit 3</fullName>
    </alternativeName>
    <alternativeName>
        <fullName>Complex III subunit III</fullName>
    </alternativeName>
    <alternativeName>
        <fullName>Cytochrome b-c1 complex subunit 3</fullName>
    </alternativeName>
    <alternativeName>
        <fullName>Ubiquinol-cytochrome-c reductase complex cytochrome b subunit</fullName>
    </alternativeName>
</protein>
<reference key="1">
    <citation type="journal article" date="1994" name="J. Mammal.">
        <title>Familial affinity of Tomopeas ravus (Chiroptera) based on protein electrophoretic and cytochrome b sequence data.</title>
        <authorList>
            <person name="Sudman P.D."/>
            <person name="Barkley L.J."/>
            <person name="Hafner M.S."/>
        </authorList>
    </citation>
    <scope>NUCLEOTIDE SEQUENCE [GENOMIC DNA]</scope>
    <source>
        <strain>Isolate MSB 42771</strain>
        <tissue>Kidney</tissue>
        <tissue>Liver</tissue>
    </source>
</reference>
<proteinExistence type="inferred from homology"/>
<organism>
    <name type="scientific">Myotis leibii</name>
    <name type="common">Eastern small-footed myotis</name>
    <dbReference type="NCBI Taxonomy" id="27668"/>
    <lineage>
        <taxon>Eukaryota</taxon>
        <taxon>Metazoa</taxon>
        <taxon>Chordata</taxon>
        <taxon>Craniata</taxon>
        <taxon>Vertebrata</taxon>
        <taxon>Euteleostomi</taxon>
        <taxon>Mammalia</taxon>
        <taxon>Eutheria</taxon>
        <taxon>Laurasiatheria</taxon>
        <taxon>Chiroptera</taxon>
        <taxon>Yangochiroptera</taxon>
        <taxon>Vespertilionidae</taxon>
        <taxon>Myotis</taxon>
    </lineage>
</organism>
<sequence length="176" mass="19647">MTNIRKSHPLIKIVNSSFIDLPAPSNISSWWNFGSLLGICLALQILTGLFLAMHYTSDTATAFNSVTHICRDVNYGWILRYLHANGASMFFICLYLHVGRGLHYGSYMYTETWNIGVTPLFAVMATAFMGYVLPWGQMSFWGATVITNLLSAIPYIGTDLAEWIWGGFSVDKATLT</sequence>
<comment type="function">
    <text evidence="2">Component of the ubiquinol-cytochrome c reductase complex (complex III or cytochrome b-c1 complex) that is part of the mitochondrial respiratory chain. The b-c1 complex mediates electron transfer from ubiquinol to cytochrome c. Contributes to the generation of a proton gradient across the mitochondrial membrane that is then used for ATP synthesis.</text>
</comment>
<comment type="cofactor">
    <cofactor evidence="2">
        <name>heme b</name>
        <dbReference type="ChEBI" id="CHEBI:60344"/>
    </cofactor>
    <text evidence="2">Binds 2 heme b groups non-covalently.</text>
</comment>
<comment type="subunit">
    <text evidence="2">The cytochrome bc1 complex contains 11 subunits: 3 respiratory subunits (MT-CYB, CYC1 and UQCRFS1), 2 core proteins (UQCRC1 and UQCRC2) and 6 low-molecular weight proteins (UQCRH/QCR6, UQCRB/QCR7, UQCRQ/QCR8, UQCR10/QCR9, UQCR11/QCR10 and a cleavage product of UQCRFS1). This cytochrome bc1 complex then forms a dimer.</text>
</comment>
<comment type="subcellular location">
    <subcellularLocation>
        <location evidence="2">Mitochondrion inner membrane</location>
        <topology evidence="2">Multi-pass membrane protein</topology>
    </subcellularLocation>
</comment>
<comment type="miscellaneous">
    <text evidence="1">Heme 1 (or BL or b562) is low-potential and absorbs at about 562 nm, and heme 2 (or BH or b566) is high-potential and absorbs at about 566 nm.</text>
</comment>
<comment type="similarity">
    <text evidence="3">Belongs to the cytochrome b family.</text>
</comment>
<comment type="caution">
    <text evidence="2">The full-length protein contains only eight transmembrane helices, not nine as predicted by bioinformatics tools.</text>
</comment>
<name>CYB_MYOLE</name>
<accession>Q36294</accession>
<dbReference type="EMBL" id="L19726">
    <property type="protein sequence ID" value="AAA17771.1"/>
    <property type="molecule type" value="Genomic_DNA"/>
</dbReference>
<dbReference type="SMR" id="Q36294"/>
<dbReference type="GO" id="GO:0005743">
    <property type="term" value="C:mitochondrial inner membrane"/>
    <property type="evidence" value="ECO:0007669"/>
    <property type="project" value="UniProtKB-SubCell"/>
</dbReference>
<dbReference type="GO" id="GO:0046872">
    <property type="term" value="F:metal ion binding"/>
    <property type="evidence" value="ECO:0007669"/>
    <property type="project" value="UniProtKB-KW"/>
</dbReference>
<dbReference type="GO" id="GO:0008121">
    <property type="term" value="F:ubiquinol-cytochrome-c reductase activity"/>
    <property type="evidence" value="ECO:0007669"/>
    <property type="project" value="TreeGrafter"/>
</dbReference>
<dbReference type="GO" id="GO:0006122">
    <property type="term" value="P:mitochondrial electron transport, ubiquinol to cytochrome c"/>
    <property type="evidence" value="ECO:0007669"/>
    <property type="project" value="TreeGrafter"/>
</dbReference>
<dbReference type="CDD" id="cd00284">
    <property type="entry name" value="Cytochrome_b_N"/>
    <property type="match status" value="1"/>
</dbReference>
<dbReference type="Gene3D" id="1.20.810.10">
    <property type="entry name" value="Cytochrome Bc1 Complex, Chain C"/>
    <property type="match status" value="1"/>
</dbReference>
<dbReference type="InterPro" id="IPR005797">
    <property type="entry name" value="Cyt_b/b6_N"/>
</dbReference>
<dbReference type="InterPro" id="IPR027387">
    <property type="entry name" value="Cytb/b6-like_sf"/>
</dbReference>
<dbReference type="InterPro" id="IPR048259">
    <property type="entry name" value="Cytochrome_b_N_euk/bac"/>
</dbReference>
<dbReference type="InterPro" id="IPR016174">
    <property type="entry name" value="Di-haem_cyt_TM"/>
</dbReference>
<dbReference type="PANTHER" id="PTHR19271">
    <property type="entry name" value="CYTOCHROME B"/>
    <property type="match status" value="1"/>
</dbReference>
<dbReference type="PANTHER" id="PTHR19271:SF16">
    <property type="entry name" value="CYTOCHROME B"/>
    <property type="match status" value="1"/>
</dbReference>
<dbReference type="Pfam" id="PF00033">
    <property type="entry name" value="Cytochrome_B"/>
    <property type="match status" value="1"/>
</dbReference>
<dbReference type="SUPFAM" id="SSF81342">
    <property type="entry name" value="Transmembrane di-heme cytochromes"/>
    <property type="match status" value="1"/>
</dbReference>
<dbReference type="PROSITE" id="PS51002">
    <property type="entry name" value="CYTB_NTER"/>
    <property type="match status" value="1"/>
</dbReference>
<keyword id="KW-0249">Electron transport</keyword>
<keyword id="KW-0349">Heme</keyword>
<keyword id="KW-0408">Iron</keyword>
<keyword id="KW-0472">Membrane</keyword>
<keyword id="KW-0479">Metal-binding</keyword>
<keyword id="KW-0496">Mitochondrion</keyword>
<keyword id="KW-0999">Mitochondrion inner membrane</keyword>
<keyword id="KW-0679">Respiratory chain</keyword>
<keyword id="KW-0812">Transmembrane</keyword>
<keyword id="KW-1133">Transmembrane helix</keyword>
<keyword id="KW-0813">Transport</keyword>
<keyword id="KW-0830">Ubiquinone</keyword>
<gene>
    <name type="primary">MT-CYB</name>
    <name type="synonym">COB</name>
    <name type="synonym">CYTB</name>
    <name type="synonym">MTCYB</name>
</gene>
<feature type="chain" id="PRO_0000061240" description="Cytochrome b">
    <location>
        <begin position="1"/>
        <end position="176" status="greater than"/>
    </location>
</feature>
<feature type="transmembrane region" description="Helical" evidence="2">
    <location>
        <begin position="33"/>
        <end position="53"/>
    </location>
</feature>
<feature type="transmembrane region" description="Helical" evidence="2">
    <location>
        <begin position="77"/>
        <end position="98"/>
    </location>
</feature>
<feature type="transmembrane region" description="Helical" evidence="2">
    <location>
        <begin position="113"/>
        <end position="133"/>
    </location>
</feature>
<feature type="binding site" description="axial binding residue" evidence="2">
    <location>
        <position position="83"/>
    </location>
    <ligand>
        <name>heme b</name>
        <dbReference type="ChEBI" id="CHEBI:60344"/>
        <label>b562</label>
    </ligand>
    <ligandPart>
        <name>Fe</name>
        <dbReference type="ChEBI" id="CHEBI:18248"/>
    </ligandPart>
</feature>
<feature type="binding site" description="axial binding residue" evidence="2">
    <location>
        <position position="97"/>
    </location>
    <ligand>
        <name>heme b</name>
        <dbReference type="ChEBI" id="CHEBI:60344"/>
        <label>b566</label>
    </ligand>
    <ligandPart>
        <name>Fe</name>
        <dbReference type="ChEBI" id="CHEBI:18248"/>
    </ligandPart>
</feature>
<feature type="non-terminal residue">
    <location>
        <position position="176"/>
    </location>
</feature>